<feature type="peptide" id="PRO_0000043503" description="Maximin-Ht">
    <location>
        <begin position="1"/>
        <end position="20"/>
    </location>
</feature>
<organism evidence="2">
    <name type="scientific">Bombina maxima</name>
    <name type="common">Giant fire-bellied toad</name>
    <name type="synonym">Chinese red belly toad</name>
    <dbReference type="NCBI Taxonomy" id="161274"/>
    <lineage>
        <taxon>Eukaryota</taxon>
        <taxon>Metazoa</taxon>
        <taxon>Chordata</taxon>
        <taxon>Craniata</taxon>
        <taxon>Vertebrata</taxon>
        <taxon>Euteleostomi</taxon>
        <taxon>Amphibia</taxon>
        <taxon>Batrachia</taxon>
        <taxon>Anura</taxon>
        <taxon>Bombinatoridae</taxon>
        <taxon>Bombina</taxon>
    </lineage>
</organism>
<keyword id="KW-0878">Amphibian defense peptide</keyword>
<keyword id="KW-0044">Antibiotic</keyword>
<keyword id="KW-0929">Antimicrobial</keyword>
<keyword id="KW-0903">Direct protein sequencing</keyword>
<keyword id="KW-0964">Secreted</keyword>
<proteinExistence type="evidence at protein level"/>
<accession>P83086</accession>
<evidence type="ECO:0000269" key="1">
    <source ref="1"/>
</evidence>
<evidence type="ECO:0000305" key="2"/>
<dbReference type="GO" id="GO:0005576">
    <property type="term" value="C:extracellular region"/>
    <property type="evidence" value="ECO:0007669"/>
    <property type="project" value="UniProtKB-SubCell"/>
</dbReference>
<dbReference type="GO" id="GO:0042742">
    <property type="term" value="P:defense response to bacterium"/>
    <property type="evidence" value="ECO:0007669"/>
    <property type="project" value="UniProtKB-KW"/>
</dbReference>
<dbReference type="InterPro" id="IPR007962">
    <property type="entry name" value="Bombinin"/>
</dbReference>
<dbReference type="Pfam" id="PF05298">
    <property type="entry name" value="Bombinin"/>
    <property type="match status" value="1"/>
</dbReference>
<reference evidence="2" key="1">
    <citation type="submission" date="2001-07" db="UniProtKB">
        <title>Isolation and structural characterisation of antimicrobial peptides from the venom of the Chinese large-webbed bell toad (Bombina maxima).</title>
        <authorList>
            <person name="Chen T.B."/>
            <person name="McClean S."/>
            <person name="Orr D.F."/>
            <person name="Bjourson A.J."/>
            <person name="Rao P.F."/>
            <person name="Shaw C."/>
        </authorList>
    </citation>
    <scope>PROTEIN SEQUENCE</scope>
    <scope>FUNCTION</scope>
    <scope>SUBCELLULAR LOCATION</scope>
    <scope>TISSUE SPECIFICITY</scope>
    <source>
        <tissue>Skin secretion</tissue>
    </source>
</reference>
<sequence length="20" mass="1947">ILGPVLGLVGNALGGLIKNE</sequence>
<protein>
    <recommendedName>
        <fullName>Maximin-Ht</fullName>
    </recommendedName>
    <alternativeName>
        <fullName>Maximin-7</fullName>
    </alternativeName>
</protein>
<name>MHT_BOMMX</name>
<comment type="function">
    <text evidence="1 2">Has antimicrobial activity.</text>
</comment>
<comment type="subcellular location">
    <subcellularLocation>
        <location evidence="1 2">Secreted</location>
    </subcellularLocation>
</comment>
<comment type="tissue specificity">
    <text evidence="1">Expressed by the skin glands.</text>
</comment>
<comment type="similarity">
    <text evidence="2">Belongs to the bombinin family.</text>
</comment>